<organism>
    <name type="scientific">Escherichia coli (strain K12)</name>
    <dbReference type="NCBI Taxonomy" id="83333"/>
    <lineage>
        <taxon>Bacteria</taxon>
        <taxon>Pseudomonadati</taxon>
        <taxon>Pseudomonadota</taxon>
        <taxon>Gammaproteobacteria</taxon>
        <taxon>Enterobacterales</taxon>
        <taxon>Enterobacteriaceae</taxon>
        <taxon>Escherichia</taxon>
    </lineage>
</organism>
<proteinExistence type="evidence at protein level"/>
<feature type="chain" id="PRO_0000170766" description="Inner membrane symporter YicJ">
    <location>
        <begin position="1"/>
        <end position="460"/>
    </location>
</feature>
<feature type="topological domain" description="Periplasmic" evidence="1">
    <location>
        <begin position="1"/>
        <end position="11"/>
    </location>
</feature>
<feature type="transmembrane region" description="Helical" evidence="1">
    <location>
        <begin position="12"/>
        <end position="32"/>
    </location>
</feature>
<feature type="transmembrane region" description="Helical" evidence="1">
    <location>
        <begin position="33"/>
        <end position="53"/>
    </location>
</feature>
<feature type="topological domain" description="Periplasmic" evidence="1">
    <location>
        <begin position="54"/>
        <end position="80"/>
    </location>
</feature>
<feature type="transmembrane region" description="Helical" evidence="1">
    <location>
        <begin position="81"/>
        <end position="101"/>
    </location>
</feature>
<feature type="topological domain" description="Cytoplasmic" evidence="1">
    <location>
        <begin position="102"/>
        <end position="116"/>
    </location>
</feature>
<feature type="transmembrane region" description="Helical" evidence="1">
    <location>
        <begin position="117"/>
        <end position="137"/>
    </location>
</feature>
<feature type="topological domain" description="Periplasmic" evidence="1">
    <location>
        <begin position="138"/>
        <end position="152"/>
    </location>
</feature>
<feature type="transmembrane region" description="Helical" evidence="1">
    <location>
        <begin position="153"/>
        <end position="173"/>
    </location>
</feature>
<feature type="topological domain" description="Cytoplasmic" evidence="1">
    <location>
        <begin position="174"/>
        <end position="181"/>
    </location>
</feature>
<feature type="transmembrane region" description="Helical" evidence="1">
    <location>
        <begin position="182"/>
        <end position="202"/>
    </location>
</feature>
<feature type="topological domain" description="Periplasmic" evidence="1">
    <location>
        <begin position="203"/>
        <end position="248"/>
    </location>
</feature>
<feature type="transmembrane region" description="Helical" evidence="1">
    <location>
        <begin position="249"/>
        <end position="269"/>
    </location>
</feature>
<feature type="topological domain" description="Cytoplasmic" evidence="1">
    <location>
        <begin position="270"/>
        <end position="288"/>
    </location>
</feature>
<feature type="transmembrane region" description="Helical" evidence="1">
    <location>
        <begin position="289"/>
        <end position="309"/>
    </location>
</feature>
<feature type="topological domain" description="Periplasmic" evidence="1">
    <location>
        <position position="310"/>
    </location>
</feature>
<feature type="transmembrane region" description="Helical" evidence="1">
    <location>
        <begin position="311"/>
        <end position="331"/>
    </location>
</feature>
<feature type="topological domain" description="Cytoplasmic" evidence="1">
    <location>
        <begin position="332"/>
        <end position="366"/>
    </location>
</feature>
<feature type="transmembrane region" description="Helical" evidence="1">
    <location>
        <begin position="367"/>
        <end position="387"/>
    </location>
</feature>
<feature type="topological domain" description="Periplasmic" evidence="1">
    <location>
        <begin position="388"/>
        <end position="403"/>
    </location>
</feature>
<feature type="transmembrane region" description="Helical" evidence="1">
    <location>
        <begin position="404"/>
        <end position="424"/>
    </location>
</feature>
<feature type="topological domain" description="Cytoplasmic" evidence="1">
    <location>
        <begin position="425"/>
        <end position="460"/>
    </location>
</feature>
<protein>
    <recommendedName>
        <fullName>Inner membrane symporter YicJ</fullName>
    </recommendedName>
</protein>
<accession>P31435</accession>
<accession>P76724</accession>
<accession>Q2M7X0</accession>
<keyword id="KW-0997">Cell inner membrane</keyword>
<keyword id="KW-1003">Cell membrane</keyword>
<keyword id="KW-0472">Membrane</keyword>
<keyword id="KW-1185">Reference proteome</keyword>
<keyword id="KW-0769">Symport</keyword>
<keyword id="KW-0812">Transmembrane</keyword>
<keyword id="KW-1133">Transmembrane helix</keyword>
<keyword id="KW-0813">Transport</keyword>
<gene>
    <name type="primary">yicJ</name>
    <name type="ordered locus">b3657</name>
    <name type="ordered locus">JW5939</name>
</gene>
<reference key="1">
    <citation type="journal article" date="1993" name="Genomics">
        <title>DNA sequence and analysis of 136 kilobases of the Escherichia coli genome: organizational symmetry around the origin of replication.</title>
        <authorList>
            <person name="Burland V.D."/>
            <person name="Plunkett G. III"/>
            <person name="Daniels D.L."/>
            <person name="Blattner F.R."/>
        </authorList>
    </citation>
    <scope>NUCLEOTIDE SEQUENCE [LARGE SCALE GENOMIC DNA]</scope>
    <source>
        <strain>K12 / MG1655 / ATCC 47076</strain>
    </source>
</reference>
<reference key="2">
    <citation type="journal article" date="1997" name="Science">
        <title>The complete genome sequence of Escherichia coli K-12.</title>
        <authorList>
            <person name="Blattner F.R."/>
            <person name="Plunkett G. III"/>
            <person name="Bloch C.A."/>
            <person name="Perna N.T."/>
            <person name="Burland V."/>
            <person name="Riley M."/>
            <person name="Collado-Vides J."/>
            <person name="Glasner J.D."/>
            <person name="Rode C.K."/>
            <person name="Mayhew G.F."/>
            <person name="Gregor J."/>
            <person name="Davis N.W."/>
            <person name="Kirkpatrick H.A."/>
            <person name="Goeden M.A."/>
            <person name="Rose D.J."/>
            <person name="Mau B."/>
            <person name="Shao Y."/>
        </authorList>
    </citation>
    <scope>NUCLEOTIDE SEQUENCE [LARGE SCALE GENOMIC DNA]</scope>
    <source>
        <strain>K12 / MG1655 / ATCC 47076</strain>
    </source>
</reference>
<reference key="3">
    <citation type="journal article" date="2006" name="Mol. Syst. Biol.">
        <title>Highly accurate genome sequences of Escherichia coli K-12 strains MG1655 and W3110.</title>
        <authorList>
            <person name="Hayashi K."/>
            <person name="Morooka N."/>
            <person name="Yamamoto Y."/>
            <person name="Fujita K."/>
            <person name="Isono K."/>
            <person name="Choi S."/>
            <person name="Ohtsubo E."/>
            <person name="Baba T."/>
            <person name="Wanner B.L."/>
            <person name="Mori H."/>
            <person name="Horiuchi T."/>
        </authorList>
    </citation>
    <scope>NUCLEOTIDE SEQUENCE [LARGE SCALE GENOMIC DNA]</scope>
    <source>
        <strain>K12 / W3110 / ATCC 27325 / DSM 5911</strain>
    </source>
</reference>
<reference key="4">
    <citation type="journal article" date="2005" name="Science">
        <title>Global topology analysis of the Escherichia coli inner membrane proteome.</title>
        <authorList>
            <person name="Daley D.O."/>
            <person name="Rapp M."/>
            <person name="Granseth E."/>
            <person name="Melen K."/>
            <person name="Drew D."/>
            <person name="von Heijne G."/>
        </authorList>
    </citation>
    <scope>TOPOLOGY [LARGE SCALE ANALYSIS]</scope>
    <source>
        <strain>K12 / MG1655 / ATCC 47076</strain>
    </source>
</reference>
<evidence type="ECO:0000255" key="1"/>
<evidence type="ECO:0000305" key="2"/>
<name>YICJ_ECOLI</name>
<dbReference type="EMBL" id="L10328">
    <property type="protein sequence ID" value="AAA62010.1"/>
    <property type="status" value="ALT_INIT"/>
    <property type="molecule type" value="Genomic_DNA"/>
</dbReference>
<dbReference type="EMBL" id="U00096">
    <property type="protein sequence ID" value="AAC76681.2"/>
    <property type="molecule type" value="Genomic_DNA"/>
</dbReference>
<dbReference type="EMBL" id="AP009048">
    <property type="protein sequence ID" value="BAE77636.1"/>
    <property type="molecule type" value="Genomic_DNA"/>
</dbReference>
<dbReference type="RefSeq" id="NP_418114.4">
    <property type="nucleotide sequence ID" value="NC_000913.3"/>
</dbReference>
<dbReference type="RefSeq" id="WP_000834439.1">
    <property type="nucleotide sequence ID" value="NZ_STEB01000024.1"/>
</dbReference>
<dbReference type="SMR" id="P31435"/>
<dbReference type="BioGRID" id="4261976">
    <property type="interactions" value="177"/>
</dbReference>
<dbReference type="FunCoup" id="P31435">
    <property type="interactions" value="224"/>
</dbReference>
<dbReference type="STRING" id="511145.b3657"/>
<dbReference type="TCDB" id="2.A.2.3.4">
    <property type="family name" value="the glycoside-pentoside-hexuronide (gph):cation symporter family"/>
</dbReference>
<dbReference type="PaxDb" id="511145-b3657"/>
<dbReference type="EnsemblBacteria" id="AAC76681">
    <property type="protein sequence ID" value="AAC76681"/>
    <property type="gene ID" value="b3657"/>
</dbReference>
<dbReference type="GeneID" id="948168"/>
<dbReference type="KEGG" id="ecj:JW5939"/>
<dbReference type="KEGG" id="eco:b3657"/>
<dbReference type="KEGG" id="ecoc:C3026_19810"/>
<dbReference type="PATRIC" id="fig|511145.12.peg.3777"/>
<dbReference type="EchoBASE" id="EB1637"/>
<dbReference type="eggNOG" id="COG2211">
    <property type="taxonomic scope" value="Bacteria"/>
</dbReference>
<dbReference type="HOGENOM" id="CLU_027408_0_2_6"/>
<dbReference type="InParanoid" id="P31435"/>
<dbReference type="OMA" id="AFAIGFN"/>
<dbReference type="OrthoDB" id="181905at2"/>
<dbReference type="PhylomeDB" id="P31435"/>
<dbReference type="BioCyc" id="EcoCyc:YICJ-MONOMER"/>
<dbReference type="PRO" id="PR:P31435"/>
<dbReference type="Proteomes" id="UP000000625">
    <property type="component" value="Chromosome"/>
</dbReference>
<dbReference type="GO" id="GO:0005886">
    <property type="term" value="C:plasma membrane"/>
    <property type="evidence" value="ECO:0000314"/>
    <property type="project" value="EcoCyc"/>
</dbReference>
<dbReference type="GO" id="GO:0015293">
    <property type="term" value="F:symporter activity"/>
    <property type="evidence" value="ECO:0007669"/>
    <property type="project" value="UniProtKB-KW"/>
</dbReference>
<dbReference type="GO" id="GO:0008643">
    <property type="term" value="P:carbohydrate transport"/>
    <property type="evidence" value="ECO:0007669"/>
    <property type="project" value="InterPro"/>
</dbReference>
<dbReference type="GO" id="GO:0006814">
    <property type="term" value="P:sodium ion transport"/>
    <property type="evidence" value="ECO:0007669"/>
    <property type="project" value="InterPro"/>
</dbReference>
<dbReference type="GO" id="GO:0055085">
    <property type="term" value="P:transmembrane transport"/>
    <property type="evidence" value="ECO:0000318"/>
    <property type="project" value="GO_Central"/>
</dbReference>
<dbReference type="CDD" id="cd17332">
    <property type="entry name" value="MFS_MelB_like"/>
    <property type="match status" value="1"/>
</dbReference>
<dbReference type="FunFam" id="1.20.1250.20:FF:000045">
    <property type="entry name" value="Glycoside-pentoside-hexuronide family transporter"/>
    <property type="match status" value="1"/>
</dbReference>
<dbReference type="Gene3D" id="1.20.1250.20">
    <property type="entry name" value="MFS general substrate transporter like domains"/>
    <property type="match status" value="1"/>
</dbReference>
<dbReference type="InterPro" id="IPR039672">
    <property type="entry name" value="MFS_2"/>
</dbReference>
<dbReference type="InterPro" id="IPR036259">
    <property type="entry name" value="MFS_trans_sf"/>
</dbReference>
<dbReference type="InterPro" id="IPR001927">
    <property type="entry name" value="Na/Gal_symport"/>
</dbReference>
<dbReference type="InterPro" id="IPR018043">
    <property type="entry name" value="Na/Gal_symport_CS"/>
</dbReference>
<dbReference type="NCBIfam" id="TIGR00792">
    <property type="entry name" value="gph"/>
    <property type="match status" value="1"/>
</dbReference>
<dbReference type="NCBIfam" id="NF008526">
    <property type="entry name" value="PRK11462.1"/>
    <property type="match status" value="1"/>
</dbReference>
<dbReference type="PANTHER" id="PTHR11328:SF24">
    <property type="entry name" value="MAJOR FACILITATOR SUPERFAMILY (MFS) PROFILE DOMAIN-CONTAINING PROTEIN"/>
    <property type="match status" value="1"/>
</dbReference>
<dbReference type="PANTHER" id="PTHR11328">
    <property type="entry name" value="MAJOR FACILITATOR SUPERFAMILY DOMAIN-CONTAINING PROTEIN"/>
    <property type="match status" value="1"/>
</dbReference>
<dbReference type="Pfam" id="PF13347">
    <property type="entry name" value="MFS_2"/>
    <property type="match status" value="1"/>
</dbReference>
<dbReference type="SUPFAM" id="SSF103473">
    <property type="entry name" value="MFS general substrate transporter"/>
    <property type="match status" value="1"/>
</dbReference>
<dbReference type="PROSITE" id="PS00872">
    <property type="entry name" value="NA_GALACTOSIDE_SYMP"/>
    <property type="match status" value="1"/>
</dbReference>
<sequence>MKSEVLSVKEKIGYGMGDAASHIIFDNVMLYMMFFYTDIFGIPAGFVGTMFLVARALDAISDPCMGLLADRTRSRWGKFRPWVLFGALPFGIVCVLAYSTPDLSMNGKMIYAAITYTLLTLLYTVVNIPYCALGGVITNDPTQRISLQSWRFVLATAGGMLSTVLMMPLVNLIGGDNKPLGFQGGIAVLSVVAFMMLAFCFFTTKERVEAPPTTTSMREDLRDIWQNDQWRIVGLLTIFNILAVCVRGGAMMYYVTWILGTPEVFVAFLTTYCVGNLIGSALAKPLTDWKCKVTIFWWTNALLAVISLAMFFVPMQASITMFVFIFVIGVLHQLVTPIQWVMMSDTVDYGEWCNGKRLTGISFAGTLFVLKLGLAFGGALIGWMLAYGGYDAAEKAQNSATISIIIALFTIVPAICYLLSAIIAKRYYSLTTHNLKTVMEQLAQGKRRCQQQFTSQEVQN</sequence>
<comment type="subcellular location">
    <subcellularLocation>
        <location>Cell inner membrane</location>
        <topology>Multi-pass membrane protein</topology>
    </subcellularLocation>
</comment>
<comment type="similarity">
    <text evidence="2">Belongs to the sodium:galactoside symporter (TC 2.A.2) family.</text>
</comment>
<comment type="sequence caution" evidence="2">
    <conflict type="erroneous initiation">
        <sequence resource="EMBL-CDS" id="AAA62010"/>
    </conflict>
    <text>Extended N-terminus.</text>
</comment>